<protein>
    <recommendedName>
        <fullName>Mediator of RNA polymerase II transcription subunit 4</fullName>
    </recommendedName>
    <alternativeName>
        <fullName>Mediator complex subunit 4</fullName>
    </alternativeName>
</protein>
<proteinExistence type="inferred from homology"/>
<reference key="1">
    <citation type="journal article" date="2015" name="Genome Announc.">
        <title>Draft genome sequence of the cellulolytic fungus Chaetomium globosum.</title>
        <authorList>
            <person name="Cuomo C.A."/>
            <person name="Untereiner W.A."/>
            <person name="Ma L.-J."/>
            <person name="Grabherr M."/>
            <person name="Birren B.W."/>
        </authorList>
    </citation>
    <scope>NUCLEOTIDE SEQUENCE [LARGE SCALE GENOMIC DNA]</scope>
    <source>
        <strain>ATCC 6205 / CBS 148.51 / DSM 1962 / NBRC 6347 / NRRL 1970</strain>
    </source>
</reference>
<feature type="chain" id="PRO_0000302075" description="Mediator of RNA polymerase II transcription subunit 4">
    <location>
        <begin position="1"/>
        <end position="351"/>
    </location>
</feature>
<feature type="region of interest" description="Disordered" evidence="3">
    <location>
        <begin position="156"/>
        <end position="217"/>
    </location>
</feature>
<feature type="region of interest" description="Disordered" evidence="3">
    <location>
        <begin position="256"/>
        <end position="351"/>
    </location>
</feature>
<feature type="coiled-coil region" evidence="2">
    <location>
        <begin position="30"/>
        <end position="68"/>
    </location>
</feature>
<feature type="coiled-coil region" evidence="2">
    <location>
        <begin position="262"/>
        <end position="311"/>
    </location>
</feature>
<feature type="compositionally biased region" description="Polar residues" evidence="3">
    <location>
        <begin position="163"/>
        <end position="177"/>
    </location>
</feature>
<feature type="compositionally biased region" description="Low complexity" evidence="3">
    <location>
        <begin position="182"/>
        <end position="198"/>
    </location>
</feature>
<feature type="compositionally biased region" description="Basic and acidic residues" evidence="3">
    <location>
        <begin position="257"/>
        <end position="308"/>
    </location>
</feature>
<feature type="compositionally biased region" description="Acidic residues" evidence="3">
    <location>
        <begin position="340"/>
        <end position="351"/>
    </location>
</feature>
<dbReference type="EMBL" id="CH408032">
    <property type="protein sequence ID" value="EAQ87393.1"/>
    <property type="molecule type" value="Genomic_DNA"/>
</dbReference>
<dbReference type="RefSeq" id="XP_001223226.1">
    <property type="nucleotide sequence ID" value="XM_001223225.1"/>
</dbReference>
<dbReference type="SMR" id="Q2H2I4"/>
<dbReference type="STRING" id="306901.Q2H2I4"/>
<dbReference type="GeneID" id="4391553"/>
<dbReference type="VEuPathDB" id="FungiDB:CHGG_04012"/>
<dbReference type="eggNOG" id="ENOG502SCD7">
    <property type="taxonomic scope" value="Eukaryota"/>
</dbReference>
<dbReference type="HOGENOM" id="CLU_057381_1_0_1"/>
<dbReference type="InParanoid" id="Q2H2I4"/>
<dbReference type="OMA" id="WPLEDKI"/>
<dbReference type="OrthoDB" id="1929813at2759"/>
<dbReference type="Proteomes" id="UP000001056">
    <property type="component" value="Unassembled WGS sequence"/>
</dbReference>
<dbReference type="GO" id="GO:0016592">
    <property type="term" value="C:mediator complex"/>
    <property type="evidence" value="ECO:0007669"/>
    <property type="project" value="InterPro"/>
</dbReference>
<dbReference type="GO" id="GO:0003712">
    <property type="term" value="F:transcription coregulator activity"/>
    <property type="evidence" value="ECO:0007669"/>
    <property type="project" value="InterPro"/>
</dbReference>
<dbReference type="GO" id="GO:0006357">
    <property type="term" value="P:regulation of transcription by RNA polymerase II"/>
    <property type="evidence" value="ECO:0007669"/>
    <property type="project" value="InterPro"/>
</dbReference>
<dbReference type="InterPro" id="IPR019258">
    <property type="entry name" value="Mediator_Med4"/>
</dbReference>
<dbReference type="Pfam" id="PF10018">
    <property type="entry name" value="Med4"/>
    <property type="match status" value="1"/>
</dbReference>
<organism>
    <name type="scientific">Chaetomium globosum (strain ATCC 6205 / CBS 148.51 / DSM 1962 / NBRC 6347 / NRRL 1970)</name>
    <name type="common">Soil fungus</name>
    <dbReference type="NCBI Taxonomy" id="306901"/>
    <lineage>
        <taxon>Eukaryota</taxon>
        <taxon>Fungi</taxon>
        <taxon>Dikarya</taxon>
        <taxon>Ascomycota</taxon>
        <taxon>Pezizomycotina</taxon>
        <taxon>Sordariomycetes</taxon>
        <taxon>Sordariomycetidae</taxon>
        <taxon>Sordariales</taxon>
        <taxon>Chaetomiaceae</taxon>
        <taxon>Chaetomium</taxon>
    </lineage>
</organism>
<evidence type="ECO:0000250" key="1"/>
<evidence type="ECO:0000255" key="2"/>
<evidence type="ECO:0000256" key="3">
    <source>
        <dbReference type="SAM" id="MobiDB-lite"/>
    </source>
</evidence>
<evidence type="ECO:0000305" key="4"/>
<accession>Q2H2I4</accession>
<sequence length="351" mass="39082">METNLDGCFERVEKTLGSMIDSLAKNNPSQKLAEELLAAEAELSKSLKLLETHQNNNARLQQLRQETSLHDTQLKDIMSSLWNMRRELKAVPTTSNPPPGPKHQFTTSELLAYARRISRNTLPLPGVTNGVDMTPTQFSASLTEPEDSFRLQFQPTQTQTPTNSFNLSFNGTVSTPIGLSAPTPTTTNDTQPSTQLPPSQQPPPKTAPADDKLPAHLKPAVNPLHDAAFHPWPTEGQIRTGALAALQRLVDAGIEPRGYDPAEQERRRVAEEKARREAEERARLEREEAERKGREERERMAREREAARLRNAGGADGDGERRESVAVARPKPKQFTFLGADDDEDDEDEDD</sequence>
<name>MED4_CHAGB</name>
<comment type="function">
    <text evidence="1">Component of the Mediator complex, a coactivator involved in the regulated transcription of nearly all RNA polymerase II-dependent genes. Mediator functions as a bridge to convey information from gene-specific regulatory proteins to the basal RNA polymerase II transcription machinery. Mediator is recruited to promoters by direct interactions with regulatory proteins and serves as a scaffold for the assembly of a functional preinitiation complex with RNA polymerase II and the general transcription factors (By similarity).</text>
</comment>
<comment type="subunit">
    <text evidence="1">Component of the Mediator complex.</text>
</comment>
<comment type="subcellular location">
    <subcellularLocation>
        <location evidence="1">Nucleus</location>
    </subcellularLocation>
</comment>
<comment type="similarity">
    <text evidence="4">Belongs to the Mediator complex subunit 4 family.</text>
</comment>
<gene>
    <name type="primary">MED4</name>
    <name type="ORF">CHGG_04012</name>
</gene>
<keyword id="KW-0010">Activator</keyword>
<keyword id="KW-0175">Coiled coil</keyword>
<keyword id="KW-0539">Nucleus</keyword>
<keyword id="KW-1185">Reference proteome</keyword>
<keyword id="KW-0804">Transcription</keyword>
<keyword id="KW-0805">Transcription regulation</keyword>